<keyword id="KW-0067">ATP-binding</keyword>
<keyword id="KW-0143">Chaperone</keyword>
<keyword id="KW-0547">Nucleotide-binding</keyword>
<keyword id="KW-0597">Phosphoprotein</keyword>
<keyword id="KW-1185">Reference proteome</keyword>
<keyword id="KW-0346">Stress response</keyword>
<gene>
    <name evidence="1" type="primary">dnaK</name>
    <name type="ordered locus">Smlt1992</name>
</gene>
<sequence>MGKIIGIDLGTTNSCVAIMDGGKARVIENSEGDRTTPSIVAYTKDGEVLVGASAKRQAVTNPKNTFYAVKRLIGRKFTDAEVQKDIAHVPYSILAHDNGDAWVATSDGKKMAPQEISAKVLEKMKKTAEDFLGEKVTEAVITVPAYFNDSQRQATKDAGRIAGLDVKRIINEPTAAALAYGLDKGDNKDRKIVVYDLGGGTFDVSVIEIANVDGEKQFEVLATNGDTFLGGEDFDNRVIEYLVEEFNKDQGIDLRKDPLALQRLKDAAERAKIELSSAQQTEVNLPYVTADASGPKHLNIKLTRAKLEALVDDLIKKSIEPCRVALNDAGLRSSDISEVILVGGQTRMPKVQQAVTEFFGKEPRKDVNPDEAVALGAAIQGGVLGGDVKDVLLLDVTPLSLGIETMGGVFTKIIEKNTTIPTKASQVFSTAEDNQSAVTVHVLQGEREQARFNKSLAKFDLSGIEPAPRGLPQVEVSFDIDANGILHVSAKDKKTNKEQKVEIKAGSGLSEEEIARMVADAEANREEDKKFQELVQARNQADALIHGTRSAITEHGSKVGGDVIGKVEAALADLETAMKGDDKAQIEAKSKALEEAGQSLFAAASADQGGAPGADAGNAGKAQDDVVDAEFTEVKDDKKS</sequence>
<name>DNAK_STRMK</name>
<comment type="function">
    <text evidence="1">Acts as a chaperone.</text>
</comment>
<comment type="induction">
    <text evidence="1">By stress conditions e.g. heat shock.</text>
</comment>
<comment type="similarity">
    <text evidence="1">Belongs to the heat shock protein 70 family.</text>
</comment>
<reference key="1">
    <citation type="journal article" date="2008" name="Genome Biol.">
        <title>The complete genome, comparative and functional analysis of Stenotrophomonas maltophilia reveals an organism heavily shielded by drug resistance determinants.</title>
        <authorList>
            <person name="Crossman L.C."/>
            <person name="Gould V.C."/>
            <person name="Dow J.M."/>
            <person name="Vernikos G.S."/>
            <person name="Okazaki A."/>
            <person name="Sebaihia M."/>
            <person name="Saunders D."/>
            <person name="Arrowsmith C."/>
            <person name="Carver T."/>
            <person name="Peters N."/>
            <person name="Adlem E."/>
            <person name="Kerhornou A."/>
            <person name="Lord A."/>
            <person name="Murphy L."/>
            <person name="Seeger K."/>
            <person name="Squares R."/>
            <person name="Rutter S."/>
            <person name="Quail M.A."/>
            <person name="Rajandream M.A."/>
            <person name="Harris D."/>
            <person name="Churcher C."/>
            <person name="Bentley S.D."/>
            <person name="Parkhill J."/>
            <person name="Thomson N.R."/>
            <person name="Avison M.B."/>
        </authorList>
    </citation>
    <scope>NUCLEOTIDE SEQUENCE [LARGE SCALE GENOMIC DNA]</scope>
    <source>
        <strain>K279a</strain>
    </source>
</reference>
<dbReference type="EMBL" id="AM743169">
    <property type="protein sequence ID" value="CAQ45506.1"/>
    <property type="molecule type" value="Genomic_DNA"/>
</dbReference>
<dbReference type="RefSeq" id="WP_005409241.1">
    <property type="nucleotide sequence ID" value="NC_010943.1"/>
</dbReference>
<dbReference type="SMR" id="B2FMY5"/>
<dbReference type="EnsemblBacteria" id="CAQ45506">
    <property type="protein sequence ID" value="CAQ45506"/>
    <property type="gene ID" value="Smlt1992"/>
</dbReference>
<dbReference type="GeneID" id="93833117"/>
<dbReference type="KEGG" id="sml:Smlt1992"/>
<dbReference type="eggNOG" id="COG0443">
    <property type="taxonomic scope" value="Bacteria"/>
</dbReference>
<dbReference type="HOGENOM" id="CLU_005965_2_4_6"/>
<dbReference type="Proteomes" id="UP000008840">
    <property type="component" value="Chromosome"/>
</dbReference>
<dbReference type="GO" id="GO:0005524">
    <property type="term" value="F:ATP binding"/>
    <property type="evidence" value="ECO:0007669"/>
    <property type="project" value="UniProtKB-UniRule"/>
</dbReference>
<dbReference type="GO" id="GO:0140662">
    <property type="term" value="F:ATP-dependent protein folding chaperone"/>
    <property type="evidence" value="ECO:0007669"/>
    <property type="project" value="InterPro"/>
</dbReference>
<dbReference type="GO" id="GO:0051082">
    <property type="term" value="F:unfolded protein binding"/>
    <property type="evidence" value="ECO:0007669"/>
    <property type="project" value="InterPro"/>
</dbReference>
<dbReference type="CDD" id="cd10234">
    <property type="entry name" value="ASKHA_NBD_HSP70_DnaK-like"/>
    <property type="match status" value="1"/>
</dbReference>
<dbReference type="FunFam" id="2.60.34.10:FF:000014">
    <property type="entry name" value="Chaperone protein DnaK HSP70"/>
    <property type="match status" value="1"/>
</dbReference>
<dbReference type="FunFam" id="1.20.1270.10:FF:000001">
    <property type="entry name" value="Molecular chaperone DnaK"/>
    <property type="match status" value="1"/>
</dbReference>
<dbReference type="FunFam" id="3.30.420.40:FF:000004">
    <property type="entry name" value="Molecular chaperone DnaK"/>
    <property type="match status" value="1"/>
</dbReference>
<dbReference type="FunFam" id="3.90.640.10:FF:000003">
    <property type="entry name" value="Molecular chaperone DnaK"/>
    <property type="match status" value="1"/>
</dbReference>
<dbReference type="Gene3D" id="1.20.1270.10">
    <property type="match status" value="1"/>
</dbReference>
<dbReference type="Gene3D" id="3.30.420.40">
    <property type="match status" value="2"/>
</dbReference>
<dbReference type="Gene3D" id="3.90.640.10">
    <property type="entry name" value="Actin, Chain A, domain 4"/>
    <property type="match status" value="1"/>
</dbReference>
<dbReference type="Gene3D" id="2.60.34.10">
    <property type="entry name" value="Substrate Binding Domain Of DNAk, Chain A, domain 1"/>
    <property type="match status" value="1"/>
</dbReference>
<dbReference type="HAMAP" id="MF_00332">
    <property type="entry name" value="DnaK"/>
    <property type="match status" value="1"/>
</dbReference>
<dbReference type="InterPro" id="IPR043129">
    <property type="entry name" value="ATPase_NBD"/>
</dbReference>
<dbReference type="InterPro" id="IPR012725">
    <property type="entry name" value="Chaperone_DnaK"/>
</dbReference>
<dbReference type="InterPro" id="IPR018181">
    <property type="entry name" value="Heat_shock_70_CS"/>
</dbReference>
<dbReference type="InterPro" id="IPR029048">
    <property type="entry name" value="HSP70_C_sf"/>
</dbReference>
<dbReference type="InterPro" id="IPR029047">
    <property type="entry name" value="HSP70_peptide-bd_sf"/>
</dbReference>
<dbReference type="InterPro" id="IPR013126">
    <property type="entry name" value="Hsp_70_fam"/>
</dbReference>
<dbReference type="NCBIfam" id="NF001413">
    <property type="entry name" value="PRK00290.1"/>
    <property type="match status" value="1"/>
</dbReference>
<dbReference type="NCBIfam" id="NF003520">
    <property type="entry name" value="PRK05183.1"/>
    <property type="match status" value="1"/>
</dbReference>
<dbReference type="NCBIfam" id="TIGR02350">
    <property type="entry name" value="prok_dnaK"/>
    <property type="match status" value="1"/>
</dbReference>
<dbReference type="PANTHER" id="PTHR19375">
    <property type="entry name" value="HEAT SHOCK PROTEIN 70KDA"/>
    <property type="match status" value="1"/>
</dbReference>
<dbReference type="Pfam" id="PF00012">
    <property type="entry name" value="HSP70"/>
    <property type="match status" value="1"/>
</dbReference>
<dbReference type="PRINTS" id="PR00301">
    <property type="entry name" value="HEATSHOCK70"/>
</dbReference>
<dbReference type="SUPFAM" id="SSF53067">
    <property type="entry name" value="Actin-like ATPase domain"/>
    <property type="match status" value="2"/>
</dbReference>
<dbReference type="SUPFAM" id="SSF100920">
    <property type="entry name" value="Heat shock protein 70kD (HSP70), peptide-binding domain"/>
    <property type="match status" value="1"/>
</dbReference>
<dbReference type="PROSITE" id="PS00297">
    <property type="entry name" value="HSP70_1"/>
    <property type="match status" value="1"/>
</dbReference>
<dbReference type="PROSITE" id="PS00329">
    <property type="entry name" value="HSP70_2"/>
    <property type="match status" value="1"/>
</dbReference>
<dbReference type="PROSITE" id="PS01036">
    <property type="entry name" value="HSP70_3"/>
    <property type="match status" value="1"/>
</dbReference>
<evidence type="ECO:0000255" key="1">
    <source>
        <dbReference type="HAMAP-Rule" id="MF_00332"/>
    </source>
</evidence>
<evidence type="ECO:0000256" key="2">
    <source>
        <dbReference type="SAM" id="MobiDB-lite"/>
    </source>
</evidence>
<accession>B2FMY5</accession>
<protein>
    <recommendedName>
        <fullName evidence="1">Chaperone protein DnaK</fullName>
    </recommendedName>
    <alternativeName>
        <fullName evidence="1">HSP70</fullName>
    </alternativeName>
    <alternativeName>
        <fullName evidence="1">Heat shock 70 kDa protein</fullName>
    </alternativeName>
    <alternativeName>
        <fullName evidence="1">Heat shock protein 70</fullName>
    </alternativeName>
</protein>
<feature type="chain" id="PRO_1000119761" description="Chaperone protein DnaK">
    <location>
        <begin position="1"/>
        <end position="640"/>
    </location>
</feature>
<feature type="region of interest" description="Disordered" evidence="2">
    <location>
        <begin position="603"/>
        <end position="625"/>
    </location>
</feature>
<feature type="compositionally biased region" description="Low complexity" evidence="2">
    <location>
        <begin position="603"/>
        <end position="621"/>
    </location>
</feature>
<feature type="modified residue" description="Phosphothreonine; by autocatalysis" evidence="1">
    <location>
        <position position="201"/>
    </location>
</feature>
<proteinExistence type="inferred from homology"/>
<organism>
    <name type="scientific">Stenotrophomonas maltophilia (strain K279a)</name>
    <dbReference type="NCBI Taxonomy" id="522373"/>
    <lineage>
        <taxon>Bacteria</taxon>
        <taxon>Pseudomonadati</taxon>
        <taxon>Pseudomonadota</taxon>
        <taxon>Gammaproteobacteria</taxon>
        <taxon>Lysobacterales</taxon>
        <taxon>Lysobacteraceae</taxon>
        <taxon>Stenotrophomonas</taxon>
        <taxon>Stenotrophomonas maltophilia group</taxon>
    </lineage>
</organism>